<organism>
    <name type="scientific">Staphylococcus aureus (strain N315)</name>
    <dbReference type="NCBI Taxonomy" id="158879"/>
    <lineage>
        <taxon>Bacteria</taxon>
        <taxon>Bacillati</taxon>
        <taxon>Bacillota</taxon>
        <taxon>Bacilli</taxon>
        <taxon>Bacillales</taxon>
        <taxon>Staphylococcaceae</taxon>
        <taxon>Staphylococcus</taxon>
    </lineage>
</organism>
<sequence length="420" mass="47598">MTNVLIEDLKWRGLIYQQTDEQGIEDLLNKEQVTLYCGADPTADSLHIGHLLPFLTLRRFQEHGHRPIVLIGGGTGMIGDPSGKSEERVLQTEEQVDKNIEGISKQMHNIFEFGTDHGAVLVNNRDWLGQISLISFLRDYGKHVGVNYMLGKDSIQSRLEHGISYTEFTYTILQAIDFGHLNRELNCKIQVGGSDQWGNITSGIELMRRMYGQTDAYGLTIPLVTKSDGKKFGKSESGAVWLDAEKTSPYEFYQFWINQSDEDVIKFLKYFTFLGKEEIDRLEQSKNEAPHLREAQKTLAEEVTKFIHGEDALNDAIRISQALFSGDLKSLSAKELKDGFKDVPQVTLSNDTTNIVEVLIETGISPSKRQAREDVNNGAIYINGERQQDVNYALAPEDKIDGEFTIIRRGKKKYFMVNYQ</sequence>
<evidence type="ECO:0000255" key="1">
    <source>
        <dbReference type="HAMAP-Rule" id="MF_02006"/>
    </source>
</evidence>
<protein>
    <recommendedName>
        <fullName evidence="1">Tyrosine--tRNA ligase</fullName>
        <ecNumber evidence="1">6.1.1.1</ecNumber>
    </recommendedName>
    <alternativeName>
        <fullName evidence="1">Tyrosyl-tRNA synthetase</fullName>
        <shortName evidence="1">TyrRS</shortName>
    </alternativeName>
</protein>
<name>SYY_STAAN</name>
<comment type="function">
    <text evidence="1">Catalyzes the attachment of tyrosine to tRNA(Tyr) in a two-step reaction: tyrosine is first activated by ATP to form Tyr-AMP and then transferred to the acceptor end of tRNA(Tyr).</text>
</comment>
<comment type="catalytic activity">
    <reaction evidence="1">
        <text>tRNA(Tyr) + L-tyrosine + ATP = L-tyrosyl-tRNA(Tyr) + AMP + diphosphate + H(+)</text>
        <dbReference type="Rhea" id="RHEA:10220"/>
        <dbReference type="Rhea" id="RHEA-COMP:9706"/>
        <dbReference type="Rhea" id="RHEA-COMP:9707"/>
        <dbReference type="ChEBI" id="CHEBI:15378"/>
        <dbReference type="ChEBI" id="CHEBI:30616"/>
        <dbReference type="ChEBI" id="CHEBI:33019"/>
        <dbReference type="ChEBI" id="CHEBI:58315"/>
        <dbReference type="ChEBI" id="CHEBI:78442"/>
        <dbReference type="ChEBI" id="CHEBI:78536"/>
        <dbReference type="ChEBI" id="CHEBI:456215"/>
        <dbReference type="EC" id="6.1.1.1"/>
    </reaction>
</comment>
<comment type="subunit">
    <text evidence="1">Homodimer.</text>
</comment>
<comment type="subcellular location">
    <subcellularLocation>
        <location evidence="1">Cytoplasm</location>
    </subcellularLocation>
</comment>
<comment type="similarity">
    <text evidence="1">Belongs to the class-I aminoacyl-tRNA synthetase family. TyrS type 1 subfamily.</text>
</comment>
<reference key="1">
    <citation type="journal article" date="2001" name="Lancet">
        <title>Whole genome sequencing of meticillin-resistant Staphylococcus aureus.</title>
        <authorList>
            <person name="Kuroda M."/>
            <person name="Ohta T."/>
            <person name="Uchiyama I."/>
            <person name="Baba T."/>
            <person name="Yuzawa H."/>
            <person name="Kobayashi I."/>
            <person name="Cui L."/>
            <person name="Oguchi A."/>
            <person name="Aoki K."/>
            <person name="Nagai Y."/>
            <person name="Lian J.-Q."/>
            <person name="Ito T."/>
            <person name="Kanamori M."/>
            <person name="Matsumaru H."/>
            <person name="Maruyama A."/>
            <person name="Murakami H."/>
            <person name="Hosoyama A."/>
            <person name="Mizutani-Ui Y."/>
            <person name="Takahashi N.K."/>
            <person name="Sawano T."/>
            <person name="Inoue R."/>
            <person name="Kaito C."/>
            <person name="Sekimizu K."/>
            <person name="Hirakawa H."/>
            <person name="Kuhara S."/>
            <person name="Goto S."/>
            <person name="Yabuzaki J."/>
            <person name="Kanehisa M."/>
            <person name="Yamashita A."/>
            <person name="Oshima K."/>
            <person name="Furuya K."/>
            <person name="Yoshino C."/>
            <person name="Shiba T."/>
            <person name="Hattori M."/>
            <person name="Ogasawara N."/>
            <person name="Hayashi H."/>
            <person name="Hiramatsu K."/>
        </authorList>
    </citation>
    <scope>NUCLEOTIDE SEQUENCE [LARGE SCALE GENOMIC DNA]</scope>
    <source>
        <strain>N315</strain>
    </source>
</reference>
<reference key="2">
    <citation type="submission" date="2005-11" db="UniProtKB">
        <title>Shotgun proteomic analysis of total protein extract of S. aureus S30 versus N315.</title>
        <authorList>
            <person name="Stenz L."/>
        </authorList>
    </citation>
    <scope>IDENTIFICATION BY MASS SPECTROMETRY</scope>
</reference>
<reference key="3">
    <citation type="submission" date="2007-10" db="UniProtKB">
        <title>Shotgun proteomic analysis of total and membrane protein extracts of S. aureus strain N315.</title>
        <authorList>
            <person name="Vaezzadeh A.R."/>
            <person name="Deshusses J."/>
            <person name="Lescuyer P."/>
            <person name="Hochstrasser D.F."/>
        </authorList>
    </citation>
    <scope>IDENTIFICATION BY MASS SPECTROMETRY [LARGE SCALE ANALYSIS]</scope>
    <source>
        <strain>N315</strain>
    </source>
</reference>
<keyword id="KW-0030">Aminoacyl-tRNA synthetase</keyword>
<keyword id="KW-0067">ATP-binding</keyword>
<keyword id="KW-0963">Cytoplasm</keyword>
<keyword id="KW-0436">Ligase</keyword>
<keyword id="KW-0547">Nucleotide-binding</keyword>
<keyword id="KW-0648">Protein biosynthesis</keyword>
<keyword id="KW-0694">RNA-binding</keyword>
<proteinExistence type="evidence at protein level"/>
<gene>
    <name evidence="1" type="primary">tyrS</name>
    <name type="ordered locus">SA1550</name>
</gene>
<dbReference type="EC" id="6.1.1.1" evidence="1"/>
<dbReference type="EMBL" id="BA000018">
    <property type="protein sequence ID" value="BAB42818.1"/>
    <property type="molecule type" value="Genomic_DNA"/>
</dbReference>
<dbReference type="PIR" id="E89957">
    <property type="entry name" value="E89957"/>
</dbReference>
<dbReference type="RefSeq" id="WP_000186029.1">
    <property type="nucleotide sequence ID" value="NC_002745.2"/>
</dbReference>
<dbReference type="SMR" id="Q7A537"/>
<dbReference type="EnsemblBacteria" id="BAB42818">
    <property type="protein sequence ID" value="BAB42818"/>
    <property type="gene ID" value="BAB42818"/>
</dbReference>
<dbReference type="KEGG" id="sau:SA1550"/>
<dbReference type="HOGENOM" id="CLU_024003_0_3_9"/>
<dbReference type="GO" id="GO:0005829">
    <property type="term" value="C:cytosol"/>
    <property type="evidence" value="ECO:0007669"/>
    <property type="project" value="TreeGrafter"/>
</dbReference>
<dbReference type="GO" id="GO:0005524">
    <property type="term" value="F:ATP binding"/>
    <property type="evidence" value="ECO:0007669"/>
    <property type="project" value="UniProtKB-UniRule"/>
</dbReference>
<dbReference type="GO" id="GO:0003723">
    <property type="term" value="F:RNA binding"/>
    <property type="evidence" value="ECO:0007669"/>
    <property type="project" value="UniProtKB-KW"/>
</dbReference>
<dbReference type="GO" id="GO:0004831">
    <property type="term" value="F:tyrosine-tRNA ligase activity"/>
    <property type="evidence" value="ECO:0007669"/>
    <property type="project" value="UniProtKB-UniRule"/>
</dbReference>
<dbReference type="GO" id="GO:0006437">
    <property type="term" value="P:tyrosyl-tRNA aminoacylation"/>
    <property type="evidence" value="ECO:0007669"/>
    <property type="project" value="UniProtKB-UniRule"/>
</dbReference>
<dbReference type="CDD" id="cd00165">
    <property type="entry name" value="S4"/>
    <property type="match status" value="1"/>
</dbReference>
<dbReference type="CDD" id="cd00395">
    <property type="entry name" value="Tyr_Trp_RS_core"/>
    <property type="match status" value="1"/>
</dbReference>
<dbReference type="FunFam" id="1.10.240.10:FF:000001">
    <property type="entry name" value="Tyrosine--tRNA ligase"/>
    <property type="match status" value="1"/>
</dbReference>
<dbReference type="FunFam" id="3.10.290.10:FF:000012">
    <property type="entry name" value="Tyrosine--tRNA ligase"/>
    <property type="match status" value="1"/>
</dbReference>
<dbReference type="FunFam" id="3.40.50.620:FF:000008">
    <property type="entry name" value="Tyrosine--tRNA ligase"/>
    <property type="match status" value="1"/>
</dbReference>
<dbReference type="Gene3D" id="3.40.50.620">
    <property type="entry name" value="HUPs"/>
    <property type="match status" value="1"/>
</dbReference>
<dbReference type="Gene3D" id="3.10.290.10">
    <property type="entry name" value="RNA-binding S4 domain"/>
    <property type="match status" value="1"/>
</dbReference>
<dbReference type="Gene3D" id="1.10.240.10">
    <property type="entry name" value="Tyrosyl-Transfer RNA Synthetase"/>
    <property type="match status" value="1"/>
</dbReference>
<dbReference type="HAMAP" id="MF_02006">
    <property type="entry name" value="Tyr_tRNA_synth_type1"/>
    <property type="match status" value="1"/>
</dbReference>
<dbReference type="InterPro" id="IPR001412">
    <property type="entry name" value="aa-tRNA-synth_I_CS"/>
</dbReference>
<dbReference type="InterPro" id="IPR002305">
    <property type="entry name" value="aa-tRNA-synth_Ic"/>
</dbReference>
<dbReference type="InterPro" id="IPR014729">
    <property type="entry name" value="Rossmann-like_a/b/a_fold"/>
</dbReference>
<dbReference type="InterPro" id="IPR002942">
    <property type="entry name" value="S4_RNA-bd"/>
</dbReference>
<dbReference type="InterPro" id="IPR036986">
    <property type="entry name" value="S4_RNA-bd_sf"/>
</dbReference>
<dbReference type="InterPro" id="IPR054608">
    <property type="entry name" value="SYY-like_C"/>
</dbReference>
<dbReference type="InterPro" id="IPR002307">
    <property type="entry name" value="Tyr-tRNA-ligase"/>
</dbReference>
<dbReference type="InterPro" id="IPR024088">
    <property type="entry name" value="Tyr-tRNA-ligase_bac-type"/>
</dbReference>
<dbReference type="InterPro" id="IPR024107">
    <property type="entry name" value="Tyr-tRNA-ligase_bac_1"/>
</dbReference>
<dbReference type="NCBIfam" id="TIGR00234">
    <property type="entry name" value="tyrS"/>
    <property type="match status" value="1"/>
</dbReference>
<dbReference type="PANTHER" id="PTHR11766:SF0">
    <property type="entry name" value="TYROSINE--TRNA LIGASE, MITOCHONDRIAL"/>
    <property type="match status" value="1"/>
</dbReference>
<dbReference type="PANTHER" id="PTHR11766">
    <property type="entry name" value="TYROSYL-TRNA SYNTHETASE"/>
    <property type="match status" value="1"/>
</dbReference>
<dbReference type="Pfam" id="PF22421">
    <property type="entry name" value="SYY_C-terminal"/>
    <property type="match status" value="1"/>
</dbReference>
<dbReference type="Pfam" id="PF00579">
    <property type="entry name" value="tRNA-synt_1b"/>
    <property type="match status" value="1"/>
</dbReference>
<dbReference type="PRINTS" id="PR01040">
    <property type="entry name" value="TRNASYNTHTYR"/>
</dbReference>
<dbReference type="SMART" id="SM00363">
    <property type="entry name" value="S4"/>
    <property type="match status" value="1"/>
</dbReference>
<dbReference type="SUPFAM" id="SSF55174">
    <property type="entry name" value="Alpha-L RNA-binding motif"/>
    <property type="match status" value="1"/>
</dbReference>
<dbReference type="SUPFAM" id="SSF52374">
    <property type="entry name" value="Nucleotidylyl transferase"/>
    <property type="match status" value="1"/>
</dbReference>
<dbReference type="PROSITE" id="PS00178">
    <property type="entry name" value="AA_TRNA_LIGASE_I"/>
    <property type="match status" value="1"/>
</dbReference>
<dbReference type="PROSITE" id="PS50889">
    <property type="entry name" value="S4"/>
    <property type="match status" value="1"/>
</dbReference>
<accession>Q7A537</accession>
<feature type="chain" id="PRO_0000234778" description="Tyrosine--tRNA ligase">
    <location>
        <begin position="1"/>
        <end position="420"/>
    </location>
</feature>
<feature type="domain" description="S4 RNA-binding" evidence="1">
    <location>
        <begin position="353"/>
        <end position="420"/>
    </location>
</feature>
<feature type="short sequence motif" description="'HIGH' region">
    <location>
        <begin position="41"/>
        <end position="50"/>
    </location>
</feature>
<feature type="short sequence motif" description="'KMSKS' region">
    <location>
        <begin position="231"/>
        <end position="235"/>
    </location>
</feature>
<feature type="binding site" evidence="1">
    <location>
        <position position="36"/>
    </location>
    <ligand>
        <name>L-tyrosine</name>
        <dbReference type="ChEBI" id="CHEBI:58315"/>
    </ligand>
</feature>
<feature type="binding site" evidence="1">
    <location>
        <position position="170"/>
    </location>
    <ligand>
        <name>L-tyrosine</name>
        <dbReference type="ChEBI" id="CHEBI:58315"/>
    </ligand>
</feature>
<feature type="binding site" evidence="1">
    <location>
        <position position="174"/>
    </location>
    <ligand>
        <name>L-tyrosine</name>
        <dbReference type="ChEBI" id="CHEBI:58315"/>
    </ligand>
</feature>
<feature type="binding site" evidence="1">
    <location>
        <position position="234"/>
    </location>
    <ligand>
        <name>ATP</name>
        <dbReference type="ChEBI" id="CHEBI:30616"/>
    </ligand>
</feature>